<evidence type="ECO:0000255" key="1">
    <source>
        <dbReference type="HAMAP-Rule" id="MF_04061"/>
    </source>
</evidence>
<evidence type="ECO:0000256" key="2">
    <source>
        <dbReference type="SAM" id="MobiDB-lite"/>
    </source>
</evidence>
<reference key="1">
    <citation type="journal article" date="1997" name="Intervirology">
        <title>Sequence analysis of the terminal protein precursor coding regions from bovine adenovirus serotypes 2 and 3.</title>
        <authorList>
            <person name="Ojkic D."/>
            <person name="Yagubi A."/>
            <person name="Bautista D."/>
            <person name="Haj-Ahmad Y."/>
        </authorList>
    </citation>
    <scope>NUCLEOTIDE SEQUENCE [GENOMIC DNA]</scope>
</reference>
<proteinExistence type="inferred from homology"/>
<name>TERM_ADEB3</name>
<protein>
    <recommendedName>
        <fullName evidence="1">Preterminal protein</fullName>
        <shortName evidence="1">pTP</shortName>
    </recommendedName>
    <alternativeName>
        <fullName evidence="1">Bellett protein</fullName>
    </alternativeName>
    <alternativeName>
        <fullName evidence="1">Precursor terminal protein</fullName>
    </alternativeName>
    <component>
        <recommendedName>
            <fullName evidence="1">Intermediate terminal protein</fullName>
            <shortName evidence="1">iTP</shortName>
        </recommendedName>
    </component>
    <component>
        <recommendedName>
            <fullName evidence="1">Terminal protein</fullName>
            <shortName evidence="1">TP</shortName>
        </recommendedName>
    </component>
</protein>
<gene>
    <name evidence="1" type="primary">PTP</name>
</gene>
<keyword id="KW-0190">Covalent protein-DNA linkage</keyword>
<keyword id="KW-0235">DNA replication</keyword>
<keyword id="KW-0238">DNA-binding</keyword>
<keyword id="KW-1048">Host nucleus</keyword>
<keyword id="KW-0597">Phosphoprotein</keyword>
<keyword id="KW-1194">Viral DNA replication</keyword>
<comment type="function">
    <text evidence="1">Protein covalently bound to the viral DNA that acts as a primer for viral genomic replication by DNA strand displacement. Assembles on the viral origin of replication in an initiation complex with viral polymerase, DBP, host NFIA and host POU2F1/OCT1. During initiation, the polymerase covalently couples the first dCTP with Ser-580 of pTP. The terminal protein stimulates the template activity over 20 fold compared to protein-free templates. Neo-synthesized viral genomes are linked to two preterminal proteins, one for each 5' end. These new genomes are encapsidated in the nucleus, and during capsid maturation by viral protease, preterminal protein is first cleaved into intermediary (iTP), then into mature TP. May play a role in host nuclear matrix localization of genomic DNA.</text>
</comment>
<comment type="subunit">
    <text evidence="1">Heterodimer with the polymerase; this heterodimer binds to bp 9 to 18 of the genome. Interacts with host POU2F1; POU2F1 binds to the auxiliary sequences in the inverted terminal repeats and tethers the pTP-POL heterodimer to the origin DNA thereby participating in the assembly of the pre-initiation complex (POL-TP-DBP-NFIA-POU2F1).</text>
</comment>
<comment type="subcellular location">
    <subcellularLocation>
        <location evidence="1">Host nucleus matrix</location>
    </subcellularLocation>
</comment>
<comment type="PTM">
    <text evidence="1">Preterminal protein is used to replicate viral genome, upon genomic encapsidation it is processed first into iTP and finally into TP by adenovirus protease.</text>
</comment>
<comment type="similarity">
    <text evidence="1">Belongs to the adenoviridae terminal protein family.</text>
</comment>
<organismHost>
    <name type="scientific">Bos taurus</name>
    <name type="common">Bovine</name>
    <dbReference type="NCBI Taxonomy" id="9913"/>
</organismHost>
<feature type="chain" id="PRO_0000221899" description="Preterminal protein" evidence="1">
    <location>
        <begin position="1"/>
        <end position="663"/>
    </location>
</feature>
<feature type="chain" id="PRO_0000433942" description="Intermediate terminal protein" evidence="1">
    <location>
        <begin position="190"/>
        <end position="663"/>
    </location>
</feature>
<feature type="chain" id="PRO_0000433943" description="Terminal protein" evidence="1">
    <location>
        <begin position="337"/>
        <end position="663"/>
    </location>
</feature>
<feature type="region of interest" description="Disordered" evidence="2">
    <location>
        <begin position="374"/>
        <end position="414"/>
    </location>
</feature>
<feature type="region of interest" description="Disordered" evidence="2">
    <location>
        <begin position="632"/>
        <end position="663"/>
    </location>
</feature>
<feature type="short sequence motif" description="Nuclear localization signal" evidence="1">
    <location>
        <begin position="367"/>
        <end position="376"/>
    </location>
</feature>
<feature type="compositionally biased region" description="Pro residues" evidence="2">
    <location>
        <begin position="380"/>
        <end position="390"/>
    </location>
</feature>
<feature type="compositionally biased region" description="Acidic residues" evidence="2">
    <location>
        <begin position="400"/>
        <end position="409"/>
    </location>
</feature>
<feature type="site" description="Cleavage; by adenovirus protease" evidence="1">
    <location>
        <begin position="189"/>
        <end position="190"/>
    </location>
</feature>
<feature type="site" description="Cleavage; by adenovirus protease" evidence="1">
    <location>
        <begin position="336"/>
        <end position="337"/>
    </location>
</feature>
<feature type="site" description="Priming of strand displacement replication by covalently linking the first nucleotide of the new DNA chain" evidence="1">
    <location>
        <position position="575"/>
    </location>
</feature>
<feature type="modified residue" description="O-(5'-phospho-DNA)-serine" evidence="1">
    <location>
        <position position="575"/>
    </location>
</feature>
<dbReference type="EMBL" id="AF035572">
    <property type="protein sequence ID" value="AAB88489.1"/>
    <property type="molecule type" value="Genomic_DNA"/>
</dbReference>
<dbReference type="GO" id="GO:0044204">
    <property type="term" value="C:host cell nuclear matrix"/>
    <property type="evidence" value="ECO:0007669"/>
    <property type="project" value="UniProtKB-SubCell"/>
</dbReference>
<dbReference type="GO" id="GO:0003690">
    <property type="term" value="F:double-stranded DNA binding"/>
    <property type="evidence" value="ECO:0007669"/>
    <property type="project" value="UniProtKB-UniRule"/>
</dbReference>
<dbReference type="GO" id="GO:0003697">
    <property type="term" value="F:single-stranded DNA binding"/>
    <property type="evidence" value="ECO:0007669"/>
    <property type="project" value="UniProtKB-UniRule"/>
</dbReference>
<dbReference type="GO" id="GO:0006260">
    <property type="term" value="P:DNA replication"/>
    <property type="evidence" value="ECO:0007669"/>
    <property type="project" value="UniProtKB-KW"/>
</dbReference>
<dbReference type="GO" id="GO:0039687">
    <property type="term" value="P:viral DNA strand displacement replication"/>
    <property type="evidence" value="ECO:0007669"/>
    <property type="project" value="UniProtKB-UniRule"/>
</dbReference>
<dbReference type="HAMAP" id="MF_04061">
    <property type="entry name" value="ADV_TERM"/>
    <property type="match status" value="1"/>
</dbReference>
<dbReference type="InterPro" id="IPR003391">
    <property type="entry name" value="Adeno_preterminal"/>
</dbReference>
<dbReference type="Pfam" id="PF02459">
    <property type="entry name" value="Adeno_terminal"/>
    <property type="match status" value="1"/>
</dbReference>
<sequence>MHHLKSPKNVSSVCFLQSARDCARLTGQTLHTMELFRPLRNIWNRAREYARAAISAAGISWMSRHVYRYPTLMLRNLGARQPATQNWPLYLYPPPHFLIGYQYVVRVCNDYVFETRAYSRLVYRETVRLDQQIVDWSTMANCSYTINAGAYHRFIDLENFDETLRQIQQAVLAERVVADLALIQPLRGFGRTEMADLPPQRRNVPVERFLQEQCMNLGECQDQAWGFANRIRIQQAGRRDLIILTTIRRLRCAYFNFLLSHPPPNRNNTERASPMLSLPCDCDWLEAFVQRFSDPVDAQSLRFETAASTERVVAHVIDALSLPQPAARPLTELRGGAFELRPREHGRAVTQEMRIRRGEMVQRFIESLPLPTRRRRVARPAPPSPSPSPEPVELEMPPLEGEEEEEEEELPPRSFAEEVRAAVAEVIRLLQEELTVSARNEQFFNFAVDFYEAINMLEREGNINESTIRRWVIYFFIVEHIATTLNYLHHHLRLSPVFARHVELNLGQVVMRARDEDGAVIYSRVWNEPGTNAFSQLMRRISTDLAATVHRAGRGELDEEEIERFMTDIAYRDHSGDVEEIIRQAELNDASINSVDLSFRFKVTGPVAFTQHPEIQRINRRVVQHASDLRQQLQPMPELNDPVQLPPLRPERQRPPLGPRRPL</sequence>
<accession>O55439</accession>
<organism>
    <name type="scientific">Bovine adenovirus B serotype 3</name>
    <name type="common">BAdV-3</name>
    <name type="synonym">Mastadenovirus bos3</name>
    <dbReference type="NCBI Taxonomy" id="10510"/>
    <lineage>
        <taxon>Viruses</taxon>
        <taxon>Varidnaviria</taxon>
        <taxon>Bamfordvirae</taxon>
        <taxon>Preplasmiviricota</taxon>
        <taxon>Tectiliviricetes</taxon>
        <taxon>Rowavirales</taxon>
        <taxon>Adenoviridae</taxon>
        <taxon>Mastadenovirus</taxon>
        <taxon>Bovine mastadenovirus B</taxon>
    </lineage>
</organism>